<organism>
    <name type="scientific">Murine coronavirus (strain S)</name>
    <name type="common">MHV-S</name>
    <name type="synonym">Murine hepatitis virus</name>
    <dbReference type="NCBI Taxonomy" id="11145"/>
    <lineage>
        <taxon>Viruses</taxon>
        <taxon>Riboviria</taxon>
        <taxon>Orthornavirae</taxon>
        <taxon>Pisuviricota</taxon>
        <taxon>Pisoniviricetes</taxon>
        <taxon>Nidovirales</taxon>
        <taxon>Cornidovirineae</taxon>
        <taxon>Coronaviridae</taxon>
        <taxon>Orthocoronavirinae</taxon>
        <taxon>Betacoronavirus</taxon>
        <taxon>Embecovirus</taxon>
        <taxon>Murine coronavirus</taxon>
    </lineage>
</organism>
<accession>P18448</accession>
<evidence type="ECO:0000250" key="1">
    <source>
        <dbReference type="UniProtKB" id="P0DTC9"/>
    </source>
</evidence>
<evidence type="ECO:0000255" key="2">
    <source>
        <dbReference type="HAMAP-Rule" id="MF_04096"/>
    </source>
</evidence>
<evidence type="ECO:0000255" key="3">
    <source>
        <dbReference type="PROSITE-ProRule" id="PRU01276"/>
    </source>
</evidence>
<evidence type="ECO:0000255" key="4">
    <source>
        <dbReference type="PROSITE-ProRule" id="PRU01277"/>
    </source>
</evidence>
<evidence type="ECO:0000256" key="5">
    <source>
        <dbReference type="SAM" id="MobiDB-lite"/>
    </source>
</evidence>
<gene>
    <name evidence="2" type="primary">N</name>
    <name type="ORF">7a</name>
</gene>
<protein>
    <recommendedName>
        <fullName evidence="2">Nucleoprotein</fullName>
    </recommendedName>
    <alternativeName>
        <fullName evidence="2">Nucleocapsid protein</fullName>
        <shortName evidence="2">NC</shortName>
        <shortName evidence="2">Protein N</shortName>
    </alternativeName>
</protein>
<comment type="function">
    <text evidence="2">Packages the positive strand viral genome RNA into a helical ribonucleocapsid (RNP) and plays a fundamental role during virion assembly through its interactions with the viral genome and membrane protein M. Plays an important role in enhancing the efficiency of subgenomic viral RNA transcription as well as viral replication.</text>
</comment>
<comment type="subunit">
    <text evidence="2">Homooligomer. Both monomeric and oligomeric forms interact with RNA. Interacts with protein M. Interacts with NSP3; this interaction serves to tether the genome to the newly translated replicase-transcriptase complex at a very early stage of infection.</text>
</comment>
<comment type="subcellular location">
    <subcellularLocation>
        <location evidence="2">Virion</location>
    </subcellularLocation>
    <subcellularLocation>
        <location evidence="2">Host endoplasmic reticulum-Golgi intermediate compartment</location>
    </subcellularLocation>
    <subcellularLocation>
        <location evidence="2">Host Golgi apparatus</location>
    </subcellularLocation>
    <text evidence="2">Located inside the virion, complexed with the viral RNA. Probably associates with ER-derived membranes where it participates in viral RNA synthesis and virus budding.</text>
</comment>
<comment type="PTM">
    <text evidence="2">ADP-ribosylated. The ADP-ribosylation is retained in the virion during infection.</text>
</comment>
<comment type="PTM">
    <text evidence="2">Phosphorylated on serine and threonine residues.</text>
</comment>
<comment type="similarity">
    <text evidence="2">Belongs to the betacoronavirus nucleocapsid protein family.</text>
</comment>
<proteinExistence type="inferred from homology"/>
<dbReference type="EMBL" id="M35255">
    <property type="protein sequence ID" value="AAA46468.1"/>
    <property type="molecule type" value="Genomic_RNA"/>
</dbReference>
<dbReference type="PIR" id="C45340">
    <property type="entry name" value="C45340"/>
</dbReference>
<dbReference type="SMR" id="P18448"/>
<dbReference type="GO" id="GO:0044172">
    <property type="term" value="C:host cell endoplasmic reticulum-Golgi intermediate compartment"/>
    <property type="evidence" value="ECO:0007669"/>
    <property type="project" value="UniProtKB-SubCell"/>
</dbReference>
<dbReference type="GO" id="GO:0044177">
    <property type="term" value="C:host cell Golgi apparatus"/>
    <property type="evidence" value="ECO:0007669"/>
    <property type="project" value="UniProtKB-SubCell"/>
</dbReference>
<dbReference type="GO" id="GO:1990904">
    <property type="term" value="C:ribonucleoprotein complex"/>
    <property type="evidence" value="ECO:0007669"/>
    <property type="project" value="UniProtKB-KW"/>
</dbReference>
<dbReference type="GO" id="GO:0019013">
    <property type="term" value="C:viral nucleocapsid"/>
    <property type="evidence" value="ECO:0007669"/>
    <property type="project" value="UniProtKB-UniRule"/>
</dbReference>
<dbReference type="GO" id="GO:0003723">
    <property type="term" value="F:RNA binding"/>
    <property type="evidence" value="ECO:0007669"/>
    <property type="project" value="UniProtKB-UniRule"/>
</dbReference>
<dbReference type="CDD" id="cd21595">
    <property type="entry name" value="CoV_N-CTD"/>
    <property type="match status" value="1"/>
</dbReference>
<dbReference type="CDD" id="cd21554">
    <property type="entry name" value="CoV_N-NTD"/>
    <property type="match status" value="1"/>
</dbReference>
<dbReference type="HAMAP" id="MF_04096">
    <property type="entry name" value="BETA_CORONA_NCAP"/>
    <property type="match status" value="1"/>
</dbReference>
<dbReference type="InterPro" id="IPR044344">
    <property type="entry name" value="N_prot_C_CoV"/>
</dbReference>
<dbReference type="InterPro" id="IPR044345">
    <property type="entry name" value="N_prot_N_CoV"/>
</dbReference>
<dbReference type="InterPro" id="IPR043505">
    <property type="entry name" value="NCAP_bCoV"/>
</dbReference>
<dbReference type="InterPro" id="IPR001218">
    <property type="entry name" value="Nucleocap_CoV"/>
</dbReference>
<dbReference type="InterPro" id="IPR037179">
    <property type="entry name" value="Nucleocapsid_C"/>
</dbReference>
<dbReference type="InterPro" id="IPR037195">
    <property type="entry name" value="Nucleocapsid_N"/>
</dbReference>
<dbReference type="Pfam" id="PF00937">
    <property type="entry name" value="CoV_nucleocap"/>
    <property type="match status" value="1"/>
</dbReference>
<dbReference type="PIRSF" id="PIRSF003888">
    <property type="entry name" value="Corona_nucleocap"/>
    <property type="match status" value="1"/>
</dbReference>
<dbReference type="SUPFAM" id="SSF110304">
    <property type="entry name" value="Coronavirus RNA-binding domain"/>
    <property type="match status" value="1"/>
</dbReference>
<dbReference type="SUPFAM" id="SSF103068">
    <property type="entry name" value="Nucleocapsid protein dimerization domain"/>
    <property type="match status" value="1"/>
</dbReference>
<dbReference type="PROSITE" id="PS51929">
    <property type="entry name" value="COV_N_CTD"/>
    <property type="match status" value="1"/>
</dbReference>
<dbReference type="PROSITE" id="PS51928">
    <property type="entry name" value="COV_N_NTD"/>
    <property type="match status" value="1"/>
</dbReference>
<name>NCAP_CVMS</name>
<organismHost>
    <name type="scientific">Mus musculus</name>
    <name type="common">Mouse</name>
    <dbReference type="NCBI Taxonomy" id="10090"/>
</organismHost>
<keyword id="KW-0013">ADP-ribosylation</keyword>
<keyword id="KW-1040">Host Golgi apparatus</keyword>
<keyword id="KW-0597">Phosphoprotein</keyword>
<keyword id="KW-0687">Ribonucleoprotein</keyword>
<keyword id="KW-0694">RNA-binding</keyword>
<keyword id="KW-0804">Transcription</keyword>
<keyword id="KW-0805">Transcription regulation</keyword>
<keyword id="KW-0543">Viral nucleoprotein</keyword>
<keyword id="KW-0946">Virion</keyword>
<sequence length="454" mass="49587">MSFVPGQENAGSRSSSGSRSGNGILKKTTWADQTERAGNNGNRGRRNQPKQTATTQPNSGSVVPHYSWFSGITQFQKGKEFQFVQGQGVPIANGIPASEQKGYWYRHNRRSFKTPDGQQKQLLPRWYFYYLGTGPHAGAEYGDDIEGVVWVASQQADTKTTADIVERDPSSHEAIPTRFAPGTVLPQGFYVEGSGRSAPASRSGSRSQSRGPNNRARSSSNQRQPASTVKPDMAEEIAALVLAKLGKDAGQPKQVTKQSAKEVRQKILNKPRQKRTPNKQCPVQQCFGKRGPNQNFGGSEMLKLGTSDPQFPILAELAPTAGAFFFGSKLELVKKNSGGADEPTKDVYELQYSGAVRFDSTLPGFETIMKVLNENLNAYQKDGGADVVSPKPQRKGRRQAQEKKDEVDNVSVAKPKSSVQRNVSRELTPEDRSLLAQILDDGVVPDGLEDDSNV</sequence>
<reference key="1">
    <citation type="journal article" date="1990" name="Virology">
        <title>Sequence comparison of the N genes of five strains of the coronavirus mouse hepatitis virus suggests a three domain structure for the nucleocapsid protein.</title>
        <authorList>
            <person name="Parker M.M."/>
            <person name="Masters P.S."/>
        </authorList>
    </citation>
    <scope>NUCLEOTIDE SEQUENCE [GENOMIC RNA]</scope>
</reference>
<feature type="chain" id="PRO_0000106010" description="Nucleoprotein">
    <location>
        <begin position="1"/>
        <end position="454"/>
    </location>
</feature>
<feature type="domain" description="CoV N NTD" evidence="3">
    <location>
        <begin position="64"/>
        <end position="193"/>
    </location>
</feature>
<feature type="domain" description="CoV N CTD" evidence="4">
    <location>
        <begin position="260"/>
        <end position="383"/>
    </location>
</feature>
<feature type="region of interest" description="Disordered" evidence="5">
    <location>
        <begin position="1"/>
        <end position="62"/>
    </location>
</feature>
<feature type="region of interest" description="RNA-binding" evidence="2">
    <location>
        <begin position="56"/>
        <end position="197"/>
    </location>
</feature>
<feature type="region of interest" description="Disordered" evidence="5">
    <location>
        <begin position="159"/>
        <end position="230"/>
    </location>
</feature>
<feature type="region of interest" description="Disordered" evidence="5">
    <location>
        <begin position="249"/>
        <end position="292"/>
    </location>
</feature>
<feature type="region of interest" description="Dimerization" evidence="2">
    <location>
        <begin position="267"/>
        <end position="383"/>
    </location>
</feature>
<feature type="region of interest" description="Disordered" evidence="5">
    <location>
        <begin position="382"/>
        <end position="428"/>
    </location>
</feature>
<feature type="compositionally biased region" description="Low complexity" evidence="5">
    <location>
        <begin position="11"/>
        <end position="21"/>
    </location>
</feature>
<feature type="compositionally biased region" description="Polar residues" evidence="5">
    <location>
        <begin position="49"/>
        <end position="61"/>
    </location>
</feature>
<feature type="compositionally biased region" description="Low complexity" evidence="5">
    <location>
        <begin position="193"/>
        <end position="212"/>
    </location>
</feature>
<feature type="compositionally biased region" description="Polar residues" evidence="5">
    <location>
        <begin position="215"/>
        <end position="227"/>
    </location>
</feature>
<feature type="compositionally biased region" description="Basic residues" evidence="5">
    <location>
        <begin position="267"/>
        <end position="277"/>
    </location>
</feature>
<feature type="binding site" evidence="1">
    <location>
        <position position="109"/>
    </location>
    <ligand>
        <name>RNA</name>
        <dbReference type="ChEBI" id="CHEBI:33697"/>
    </ligand>
</feature>
<feature type="binding site" evidence="1">
    <location>
        <position position="125"/>
    </location>
    <ligand>
        <name>RNA</name>
        <dbReference type="ChEBI" id="CHEBI:33697"/>
    </ligand>
</feature>
<feature type="binding site" evidence="1">
    <location>
        <position position="167"/>
    </location>
    <ligand>
        <name>RNA</name>
        <dbReference type="ChEBI" id="CHEBI:33697"/>
    </ligand>
</feature>
<feature type="modified residue" description="Phosphoserine; by host" evidence="2">
    <location>
        <position position="170"/>
    </location>
</feature>
<feature type="modified residue" description="Phosphothreonine; by host" evidence="2">
    <location>
        <position position="177"/>
    </location>
</feature>
<feature type="modified residue" description="Phosphoserine; by host" evidence="2">
    <location>
        <position position="194"/>
    </location>
</feature>
<feature type="modified residue" description="Phosphoserine; by host" evidence="2">
    <location>
        <position position="389"/>
    </location>
</feature>
<feature type="modified residue" description="Phosphoserine; by host" evidence="2">
    <location>
        <position position="424"/>
    </location>
</feature>
<feature type="modified residue" description="Phosphothreonine; by host" evidence="2">
    <location>
        <position position="428"/>
    </location>
</feature>